<feature type="chain" id="PRO_0000324281" description="Non-structural protein 1">
    <location>
        <begin position="1"/>
        <end position="230"/>
    </location>
</feature>
<feature type="region of interest" description="RNA-binding and homodimerization" evidence="1">
    <location>
        <begin position="1"/>
        <end position="73"/>
    </location>
</feature>
<feature type="region of interest" description="CPSF4-binding" evidence="1">
    <location>
        <begin position="180"/>
        <end position="215"/>
    </location>
</feature>
<feature type="region of interest" description="Disordered" evidence="2">
    <location>
        <begin position="205"/>
        <end position="230"/>
    </location>
</feature>
<feature type="region of interest" description="PABPN1-binding" evidence="1">
    <location>
        <begin position="223"/>
        <end position="230"/>
    </location>
</feature>
<feature type="short sequence motif" description="Nuclear localization signal" evidence="1">
    <location>
        <begin position="34"/>
        <end position="38"/>
    </location>
</feature>
<feature type="short sequence motif" description="Nuclear export signal" evidence="1">
    <location>
        <begin position="137"/>
        <end position="146"/>
    </location>
</feature>
<organism>
    <name type="scientific">Influenza A virus (strain A/Equine/Alaska/1/1991 H3N8)</name>
    <dbReference type="NCBI Taxonomy" id="387213"/>
    <lineage>
        <taxon>Viruses</taxon>
        <taxon>Riboviria</taxon>
        <taxon>Orthornavirae</taxon>
        <taxon>Negarnaviricota</taxon>
        <taxon>Polyploviricotina</taxon>
        <taxon>Insthoviricetes</taxon>
        <taxon>Articulavirales</taxon>
        <taxon>Orthomyxoviridae</taxon>
        <taxon>Alphainfluenzavirus</taxon>
        <taxon>Alphainfluenzavirus influenzae</taxon>
        <taxon>Influenza A virus</taxon>
    </lineage>
</organism>
<organismHost>
    <name type="scientific">Aves</name>
    <dbReference type="NCBI Taxonomy" id="8782"/>
</organismHost>
<organismHost>
    <name type="scientific">Equus caballus</name>
    <name type="common">Horse</name>
    <dbReference type="NCBI Taxonomy" id="9796"/>
</organismHost>
<reference key="1">
    <citation type="journal article" date="1998" name="Arch. Virol.">
        <title>Phylogenetic analyses of the matrix and non-structural genes of equine influenza viruses.</title>
        <authorList>
            <person name="Lindstrom S."/>
            <person name="Endo A."/>
            <person name="Sugita S."/>
            <person name="Pecoraro M."/>
            <person name="Hiromoto Y."/>
            <person name="Kamada M."/>
            <person name="Takahashi T."/>
            <person name="Nerome K."/>
        </authorList>
    </citation>
    <scope>NUCLEOTIDE SEQUENCE [GENOMIC RNA]</scope>
</reference>
<protein>
    <recommendedName>
        <fullName evidence="1">Non-structural protein 1</fullName>
        <shortName evidence="1">NS1</shortName>
    </recommendedName>
    <alternativeName>
        <fullName evidence="1">NS1A</fullName>
    </alternativeName>
</protein>
<accession>Q77ZM3</accession>
<name>NS1_I91A0</name>
<comment type="function">
    <text evidence="1">Inhibits post-transcriptional processing of cellular pre-mRNA, by binding and inhibiting two cellular proteins that are required for the 3'-end processing of cellular pre-mRNAs: the 30 kDa cleavage and polyadenylation specificity factor/CPSF4 and the poly(A)-binding protein 2/PABPN1. In turn, unprocessed 3' end pre-mRNAs accumulate in the host nucleus and are no longer exported to the cytoplasm. Cellular protein synthesis is thereby shut off very early after virus infection. Viral protein synthesis is not affected by the inhibition of the cellular 3' end processing machinery because the poly(A) tails of viral mRNAs are produced by the viral polymerase through a stuttering mechanism. Prevents the establishment of the cellular antiviral state by inhibiting TRIM25-mediated RIGI ubiquitination, which normally triggers the antiviral transduction signal that leads to the activation of type I IFN genes by transcription factors IRF3 and IRF7. Also binds poly(A) and U6 snRNA. Inhibits the integrated stress response (ISR) in the infected cell by blocking dsRNA binding by EIF2AK2/PKR and further phosphorylation of EIF2S1/EIF-2ALPHA. Stress granule formation is thus inhibited, which allows protein synthesis and viral replication.</text>
</comment>
<comment type="subunit">
    <text evidence="1">Homodimer. Interacts with host TRIM25 (via coiled coil); this interaction specifically inhibits TRIM25 multimerization and TRIM25-mediated RIGI CARD ubiquitination. Interacts with human EIF2AK2/PKR, CPSF4, IVNS1ABP and PABPN1.</text>
</comment>
<comment type="subcellular location">
    <subcellularLocation>
        <location evidence="1">Host nucleus</location>
    </subcellularLocation>
    <subcellularLocation>
        <location evidence="1">Host cytoplasm</location>
    </subcellularLocation>
    <text evidence="1">In uninfected, transfected cells, NS1 is localized in the nucleus. Only in virus infected cells, the nuclear export signal is unveiled, presumably by a viral protein, and a fraction of NS1 is exported in the cytoplasm.</text>
</comment>
<comment type="alternative products">
    <event type="alternative splicing"/>
    <isoform>
        <id>Q77ZM3-1</id>
        <name>NS1</name>
        <sequence type="displayed"/>
    </isoform>
    <isoform>
        <id>Q77ZM4-1</id>
        <name>NEP</name>
        <name>NS2</name>
        <sequence type="external"/>
    </isoform>
</comment>
<comment type="domain">
    <text evidence="1">The dsRNA-binding region is required for suppression of RNA silencing.</text>
</comment>
<comment type="PTM">
    <text evidence="1">Upon interferon induction, ISGylated via host HERC5; this results in the impairment of NS1 interaction with RNA targets due to its inability to form homodimers and to interact with host EIF2AK2/PKR.</text>
</comment>
<comment type="similarity">
    <text evidence="1">Belongs to the influenza A viruses NS1 family.</text>
</comment>
<sequence length="230" mass="26169">MDSNTVSSFQVDCFLWHVRKRFADQELGDAPFLDRLRRDQKSLKGRGSTLGLDIETATRAGKQIVEQILEEESDEALKMTIASVPASRYLTDMTLDEMSRDWFMLMPKQKVTGSLCIRMDQAIMDKNIILKANFSVIFERLETLILLRAFTEEGAVVGEISPLPSLPGHTNEDVKNAIGVLIGGLKWNDNTVRISETLQRFAWRSSHENGRPSFPPKQKRKMERTIEPEV</sequence>
<keyword id="KW-0025">Alternative splicing</keyword>
<keyword id="KW-1262">Eukaryotic host gene expression shutoff by virus</keyword>
<keyword id="KW-1035">Host cytoplasm</keyword>
<keyword id="KW-1190">Host gene expression shutoff by virus</keyword>
<keyword id="KW-1192">Host mRNA suppression by virus</keyword>
<keyword id="KW-1048">Host nucleus</keyword>
<keyword id="KW-0945">Host-virus interaction</keyword>
<keyword id="KW-1090">Inhibition of host innate immune response by virus</keyword>
<keyword id="KW-1114">Inhibition of host interferon signaling pathway by virus</keyword>
<keyword id="KW-1102">Inhibition of host PKR by virus</keyword>
<keyword id="KW-1103">Inhibition of host pre-mRNA processing by virus</keyword>
<keyword id="KW-1088">Inhibition of host RIG-I by virus</keyword>
<keyword id="KW-1113">Inhibition of host RLR pathway by virus</keyword>
<keyword id="KW-0922">Interferon antiviral system evasion</keyword>
<keyword id="KW-0694">RNA-binding</keyword>
<keyword id="KW-0832">Ubl conjugation</keyword>
<keyword id="KW-0899">Viral immunoevasion</keyword>
<proteinExistence type="inferred from homology"/>
<dbReference type="EMBL" id="AF001667">
    <property type="protein sequence ID" value="AAC31258.1"/>
    <property type="molecule type" value="Genomic_RNA"/>
</dbReference>
<dbReference type="SMR" id="Q77ZM3"/>
<dbReference type="GO" id="GO:0030430">
    <property type="term" value="C:host cell cytoplasm"/>
    <property type="evidence" value="ECO:0007669"/>
    <property type="project" value="UniProtKB-SubCell"/>
</dbReference>
<dbReference type="GO" id="GO:0042025">
    <property type="term" value="C:host cell nucleus"/>
    <property type="evidence" value="ECO:0007669"/>
    <property type="project" value="UniProtKB-SubCell"/>
</dbReference>
<dbReference type="GO" id="GO:0030291">
    <property type="term" value="F:protein serine/threonine kinase inhibitor activity"/>
    <property type="evidence" value="ECO:0007669"/>
    <property type="project" value="UniProtKB-KW"/>
</dbReference>
<dbReference type="GO" id="GO:0003723">
    <property type="term" value="F:RNA binding"/>
    <property type="evidence" value="ECO:0007669"/>
    <property type="project" value="UniProtKB-KW"/>
</dbReference>
<dbReference type="GO" id="GO:0039540">
    <property type="term" value="P:symbiont-mediated suppression of host cytoplasmic pattern recognition receptor signaling pathway via inhibition of RIG-I activity"/>
    <property type="evidence" value="ECO:0007669"/>
    <property type="project" value="UniProtKB-KW"/>
</dbReference>
<dbReference type="GO" id="GO:0039657">
    <property type="term" value="P:symbiont-mediated suppression of host gene expression"/>
    <property type="evidence" value="ECO:0007669"/>
    <property type="project" value="UniProtKB-KW"/>
</dbReference>
<dbReference type="GO" id="GO:0039524">
    <property type="term" value="P:symbiont-mediated suppression of host mRNA processing"/>
    <property type="evidence" value="ECO:0007669"/>
    <property type="project" value="UniProtKB-KW"/>
</dbReference>
<dbReference type="GO" id="GO:0039580">
    <property type="term" value="P:symbiont-mediated suppression of host PKR/eIFalpha signaling"/>
    <property type="evidence" value="ECO:0007669"/>
    <property type="project" value="UniProtKB-KW"/>
</dbReference>
<dbReference type="GO" id="GO:0039502">
    <property type="term" value="P:symbiont-mediated suppression of host type I interferon-mediated signaling pathway"/>
    <property type="evidence" value="ECO:0007669"/>
    <property type="project" value="UniProtKB-KW"/>
</dbReference>
<dbReference type="FunFam" id="1.10.287.10:FF:000001">
    <property type="entry name" value="Non-structural protein 1"/>
    <property type="match status" value="1"/>
</dbReference>
<dbReference type="FunFam" id="3.30.420.330:FF:000001">
    <property type="entry name" value="Non-structural protein 1"/>
    <property type="match status" value="1"/>
</dbReference>
<dbReference type="Gene3D" id="3.30.420.330">
    <property type="entry name" value="Influenza virus non-structural protein, effector domain"/>
    <property type="match status" value="1"/>
</dbReference>
<dbReference type="Gene3D" id="1.10.287.10">
    <property type="entry name" value="S15/NS1, RNA-binding"/>
    <property type="match status" value="1"/>
</dbReference>
<dbReference type="HAMAP" id="MF_04066">
    <property type="entry name" value="INFV_NS1"/>
    <property type="match status" value="1"/>
</dbReference>
<dbReference type="InterPro" id="IPR004208">
    <property type="entry name" value="NS1"/>
</dbReference>
<dbReference type="InterPro" id="IPR000256">
    <property type="entry name" value="NS1A"/>
</dbReference>
<dbReference type="InterPro" id="IPR038064">
    <property type="entry name" value="NS1A_effect_dom-like_sf"/>
</dbReference>
<dbReference type="InterPro" id="IPR009068">
    <property type="entry name" value="uS15_NS1_RNA-bd_sf"/>
</dbReference>
<dbReference type="Pfam" id="PF00600">
    <property type="entry name" value="Flu_NS1"/>
    <property type="match status" value="1"/>
</dbReference>
<dbReference type="SUPFAM" id="SSF143021">
    <property type="entry name" value="Ns1 effector domain-like"/>
    <property type="match status" value="1"/>
</dbReference>
<dbReference type="SUPFAM" id="SSF47060">
    <property type="entry name" value="S15/NS1 RNA-binding domain"/>
    <property type="match status" value="1"/>
</dbReference>
<evidence type="ECO:0000255" key="1">
    <source>
        <dbReference type="HAMAP-Rule" id="MF_04066"/>
    </source>
</evidence>
<evidence type="ECO:0000256" key="2">
    <source>
        <dbReference type="SAM" id="MobiDB-lite"/>
    </source>
</evidence>
<gene>
    <name evidence="1" type="primary">NS</name>
</gene>